<organism>
    <name type="scientific">Vibrio vulnificus (strain CMCP6)</name>
    <dbReference type="NCBI Taxonomy" id="216895"/>
    <lineage>
        <taxon>Bacteria</taxon>
        <taxon>Pseudomonadati</taxon>
        <taxon>Pseudomonadota</taxon>
        <taxon>Gammaproteobacteria</taxon>
        <taxon>Vibrionales</taxon>
        <taxon>Vibrionaceae</taxon>
        <taxon>Vibrio</taxon>
    </lineage>
</organism>
<comment type="function">
    <text evidence="1">Catalyzes the condensation of the acetyl group of acetyl-CoA with 3-methyl-2-oxobutanoate (2-ketoisovalerate) to form 3-carboxy-3-hydroxy-4-methylpentanoate (2-isopropylmalate).</text>
</comment>
<comment type="catalytic activity">
    <reaction evidence="1">
        <text>3-methyl-2-oxobutanoate + acetyl-CoA + H2O = (2S)-2-isopropylmalate + CoA + H(+)</text>
        <dbReference type="Rhea" id="RHEA:21524"/>
        <dbReference type="ChEBI" id="CHEBI:1178"/>
        <dbReference type="ChEBI" id="CHEBI:11851"/>
        <dbReference type="ChEBI" id="CHEBI:15377"/>
        <dbReference type="ChEBI" id="CHEBI:15378"/>
        <dbReference type="ChEBI" id="CHEBI:57287"/>
        <dbReference type="ChEBI" id="CHEBI:57288"/>
        <dbReference type="EC" id="2.3.3.13"/>
    </reaction>
</comment>
<comment type="cofactor">
    <cofactor evidence="1">
        <name>Mn(2+)</name>
        <dbReference type="ChEBI" id="CHEBI:29035"/>
    </cofactor>
</comment>
<comment type="pathway">
    <text evidence="1">Amino-acid biosynthesis; L-leucine biosynthesis; L-leucine from 3-methyl-2-oxobutanoate: step 1/4.</text>
</comment>
<comment type="subunit">
    <text evidence="1">Homodimer.</text>
</comment>
<comment type="subcellular location">
    <subcellularLocation>
        <location evidence="1">Cytoplasm</location>
    </subcellularLocation>
</comment>
<comment type="similarity">
    <text evidence="1">Belongs to the alpha-IPM synthase/homocitrate synthase family. LeuA type 1 subfamily.</text>
</comment>
<sequence length="515" mass="56419">MNDQVIIFDTTLRDGEQALSASLTVKEKLQIAYALERLGVDVIEAGFPVSSPGDFESVQTIARNIKNSRVCALSRAVEKDIDAAAEALKVAEAFRIHTFISTSTIHVQDKLRRSYDDVVEMGVRAVKHARKYTDDVEFSCEDAGRTPIDNLCRMVEAAINAGARTINIPDTVGYTVPSEFGGIIQTLFNRVPNIDKAIISVHCHDDLGMSVANSIAAVQAGARQVEGTINGIGERAGNCSLEEIAMIIKTRQELLGVRTGINHEEIHRTSKLVSQLCNMPIQANKAIVGANAFSHSSGIHQDGMLKNKNTYEIMTPESIGLKNQALNLTSRSGRAAVKSHMDAMGYKEDEYNLDALYQDFLKLADRKGQVFDYDLEALMHFSNLREEDDYYKLNYLSVQSGSVMATTSIKLLCGDEEKCEAAVGNGPVDALYQCIYRLTGYDIVLDKFDLTAKGEGEDGLGQADIIANYKGRKYHGTGISTDIVEASGQALLHVINSIHRADEIAEMKQKKIATV</sequence>
<accession>Q8DEE1</accession>
<keyword id="KW-0028">Amino-acid biosynthesis</keyword>
<keyword id="KW-0100">Branched-chain amino acid biosynthesis</keyword>
<keyword id="KW-0963">Cytoplasm</keyword>
<keyword id="KW-0432">Leucine biosynthesis</keyword>
<keyword id="KW-0464">Manganese</keyword>
<keyword id="KW-0479">Metal-binding</keyword>
<keyword id="KW-0808">Transferase</keyword>
<evidence type="ECO:0000255" key="1">
    <source>
        <dbReference type="HAMAP-Rule" id="MF_01025"/>
    </source>
</evidence>
<proteinExistence type="inferred from homology"/>
<reference key="1">
    <citation type="submission" date="2002-12" db="EMBL/GenBank/DDBJ databases">
        <title>Complete genome sequence of Vibrio vulnificus CMCP6.</title>
        <authorList>
            <person name="Rhee J.H."/>
            <person name="Kim S.Y."/>
            <person name="Chung S.S."/>
            <person name="Kim J.J."/>
            <person name="Moon Y.H."/>
            <person name="Jeong H."/>
            <person name="Choy H.E."/>
        </authorList>
    </citation>
    <scope>NUCLEOTIDE SEQUENCE [LARGE SCALE GENOMIC DNA]</scope>
    <source>
        <strain>CMCP6</strain>
    </source>
</reference>
<dbReference type="EC" id="2.3.3.13" evidence="1"/>
<dbReference type="EMBL" id="AE016795">
    <property type="protein sequence ID" value="AAO09166.1"/>
    <property type="molecule type" value="Genomic_DNA"/>
</dbReference>
<dbReference type="RefSeq" id="WP_011078733.1">
    <property type="nucleotide sequence ID" value="NC_004459.3"/>
</dbReference>
<dbReference type="SMR" id="Q8DEE1"/>
<dbReference type="KEGG" id="vvu:VV1_0654"/>
<dbReference type="HOGENOM" id="CLU_022158_0_1_6"/>
<dbReference type="UniPathway" id="UPA00048">
    <property type="reaction ID" value="UER00070"/>
</dbReference>
<dbReference type="Proteomes" id="UP000002275">
    <property type="component" value="Chromosome 1"/>
</dbReference>
<dbReference type="GO" id="GO:0005829">
    <property type="term" value="C:cytosol"/>
    <property type="evidence" value="ECO:0007669"/>
    <property type="project" value="TreeGrafter"/>
</dbReference>
<dbReference type="GO" id="GO:0003852">
    <property type="term" value="F:2-isopropylmalate synthase activity"/>
    <property type="evidence" value="ECO:0007669"/>
    <property type="project" value="UniProtKB-UniRule"/>
</dbReference>
<dbReference type="GO" id="GO:0003985">
    <property type="term" value="F:acetyl-CoA C-acetyltransferase activity"/>
    <property type="evidence" value="ECO:0007669"/>
    <property type="project" value="UniProtKB-UniRule"/>
</dbReference>
<dbReference type="GO" id="GO:0030145">
    <property type="term" value="F:manganese ion binding"/>
    <property type="evidence" value="ECO:0007669"/>
    <property type="project" value="UniProtKB-UniRule"/>
</dbReference>
<dbReference type="GO" id="GO:0009098">
    <property type="term" value="P:L-leucine biosynthetic process"/>
    <property type="evidence" value="ECO:0007669"/>
    <property type="project" value="UniProtKB-UniRule"/>
</dbReference>
<dbReference type="CDD" id="cd07940">
    <property type="entry name" value="DRE_TIM_IPMS"/>
    <property type="match status" value="1"/>
</dbReference>
<dbReference type="FunFam" id="1.10.238.260:FF:000001">
    <property type="entry name" value="2-isopropylmalate synthase"/>
    <property type="match status" value="1"/>
</dbReference>
<dbReference type="FunFam" id="3.20.20.70:FF:000010">
    <property type="entry name" value="2-isopropylmalate synthase"/>
    <property type="match status" value="1"/>
</dbReference>
<dbReference type="FunFam" id="3.30.160.270:FF:000001">
    <property type="entry name" value="2-isopropylmalate synthase"/>
    <property type="match status" value="1"/>
</dbReference>
<dbReference type="Gene3D" id="1.10.238.260">
    <property type="match status" value="1"/>
</dbReference>
<dbReference type="Gene3D" id="3.30.160.270">
    <property type="match status" value="1"/>
</dbReference>
<dbReference type="Gene3D" id="3.20.20.70">
    <property type="entry name" value="Aldolase class I"/>
    <property type="match status" value="1"/>
</dbReference>
<dbReference type="HAMAP" id="MF_01025">
    <property type="entry name" value="LeuA_type1"/>
    <property type="match status" value="1"/>
</dbReference>
<dbReference type="InterPro" id="IPR050073">
    <property type="entry name" value="2-IPM_HCS-like"/>
</dbReference>
<dbReference type="InterPro" id="IPR013709">
    <property type="entry name" value="2-isopropylmalate_synth_dimer"/>
</dbReference>
<dbReference type="InterPro" id="IPR002034">
    <property type="entry name" value="AIPM/Hcit_synth_CS"/>
</dbReference>
<dbReference type="InterPro" id="IPR013785">
    <property type="entry name" value="Aldolase_TIM"/>
</dbReference>
<dbReference type="InterPro" id="IPR054691">
    <property type="entry name" value="LeuA/HCS_post-cat"/>
</dbReference>
<dbReference type="InterPro" id="IPR036230">
    <property type="entry name" value="LeuA_allosteric_dom_sf"/>
</dbReference>
<dbReference type="InterPro" id="IPR005671">
    <property type="entry name" value="LeuA_bact_synth"/>
</dbReference>
<dbReference type="InterPro" id="IPR000891">
    <property type="entry name" value="PYR_CT"/>
</dbReference>
<dbReference type="NCBIfam" id="TIGR00973">
    <property type="entry name" value="leuA_bact"/>
    <property type="match status" value="1"/>
</dbReference>
<dbReference type="NCBIfam" id="NF002084">
    <property type="entry name" value="PRK00915.1-1"/>
    <property type="match status" value="1"/>
</dbReference>
<dbReference type="NCBIfam" id="NF002086">
    <property type="entry name" value="PRK00915.1-3"/>
    <property type="match status" value="1"/>
</dbReference>
<dbReference type="PANTHER" id="PTHR10277:SF9">
    <property type="entry name" value="2-ISOPROPYLMALATE SYNTHASE 1, CHLOROPLASTIC-RELATED"/>
    <property type="match status" value="1"/>
</dbReference>
<dbReference type="PANTHER" id="PTHR10277">
    <property type="entry name" value="HOMOCITRATE SYNTHASE-RELATED"/>
    <property type="match status" value="1"/>
</dbReference>
<dbReference type="Pfam" id="PF22617">
    <property type="entry name" value="HCS_D2"/>
    <property type="match status" value="1"/>
</dbReference>
<dbReference type="Pfam" id="PF00682">
    <property type="entry name" value="HMGL-like"/>
    <property type="match status" value="1"/>
</dbReference>
<dbReference type="Pfam" id="PF08502">
    <property type="entry name" value="LeuA_dimer"/>
    <property type="match status" value="1"/>
</dbReference>
<dbReference type="SMART" id="SM00917">
    <property type="entry name" value="LeuA_dimer"/>
    <property type="match status" value="1"/>
</dbReference>
<dbReference type="SUPFAM" id="SSF110921">
    <property type="entry name" value="2-isopropylmalate synthase LeuA, allosteric (dimerisation) domain"/>
    <property type="match status" value="1"/>
</dbReference>
<dbReference type="SUPFAM" id="SSF51569">
    <property type="entry name" value="Aldolase"/>
    <property type="match status" value="1"/>
</dbReference>
<dbReference type="PROSITE" id="PS00815">
    <property type="entry name" value="AIPM_HOMOCIT_SYNTH_1"/>
    <property type="match status" value="1"/>
</dbReference>
<dbReference type="PROSITE" id="PS00816">
    <property type="entry name" value="AIPM_HOMOCIT_SYNTH_2"/>
    <property type="match status" value="1"/>
</dbReference>
<dbReference type="PROSITE" id="PS50991">
    <property type="entry name" value="PYR_CT"/>
    <property type="match status" value="1"/>
</dbReference>
<gene>
    <name evidence="1" type="primary">leuA</name>
    <name type="ordered locus">VV1_0654</name>
</gene>
<protein>
    <recommendedName>
        <fullName evidence="1">2-isopropylmalate synthase</fullName>
        <ecNumber evidence="1">2.3.3.13</ecNumber>
    </recommendedName>
    <alternativeName>
        <fullName evidence="1">Alpha-IPM synthase</fullName>
    </alternativeName>
    <alternativeName>
        <fullName evidence="1">Alpha-isopropylmalate synthase</fullName>
    </alternativeName>
</protein>
<name>LEU1_VIBVU</name>
<feature type="chain" id="PRO_0000140397" description="2-isopropylmalate synthase">
    <location>
        <begin position="1"/>
        <end position="515"/>
    </location>
</feature>
<feature type="domain" description="Pyruvate carboxyltransferase" evidence="1">
    <location>
        <begin position="5"/>
        <end position="267"/>
    </location>
</feature>
<feature type="region of interest" description="Regulatory domain" evidence="1">
    <location>
        <begin position="392"/>
        <end position="515"/>
    </location>
</feature>
<feature type="binding site" evidence="1">
    <location>
        <position position="14"/>
    </location>
    <ligand>
        <name>Mn(2+)</name>
        <dbReference type="ChEBI" id="CHEBI:29035"/>
    </ligand>
</feature>
<feature type="binding site" evidence="1">
    <location>
        <position position="202"/>
    </location>
    <ligand>
        <name>Mn(2+)</name>
        <dbReference type="ChEBI" id="CHEBI:29035"/>
    </ligand>
</feature>
<feature type="binding site" evidence="1">
    <location>
        <position position="204"/>
    </location>
    <ligand>
        <name>Mn(2+)</name>
        <dbReference type="ChEBI" id="CHEBI:29035"/>
    </ligand>
</feature>
<feature type="binding site" evidence="1">
    <location>
        <position position="238"/>
    </location>
    <ligand>
        <name>Mn(2+)</name>
        <dbReference type="ChEBI" id="CHEBI:29035"/>
    </ligand>
</feature>